<organism>
    <name type="scientific">Amanita phalloides</name>
    <name type="common">Death cap</name>
    <dbReference type="NCBI Taxonomy" id="67723"/>
    <lineage>
        <taxon>Eukaryota</taxon>
        <taxon>Fungi</taxon>
        <taxon>Dikarya</taxon>
        <taxon>Basidiomycota</taxon>
        <taxon>Agaricomycotina</taxon>
        <taxon>Agaricomycetes</taxon>
        <taxon>Agaricomycetidae</taxon>
        <taxon>Agaricales</taxon>
        <taxon>Pluteineae</taxon>
        <taxon>Amanitaceae</taxon>
        <taxon>Amanita</taxon>
    </lineage>
</organism>
<keyword id="KW-0883">Thioether bond</keyword>
<keyword id="KW-0800">Toxin</keyword>
<evidence type="ECO:0000250" key="1">
    <source>
        <dbReference type="UniProtKB" id="A0A023IWK6"/>
    </source>
</evidence>
<evidence type="ECO:0000250" key="2">
    <source>
        <dbReference type="UniProtKB" id="A0A067SLB9"/>
    </source>
</evidence>
<evidence type="ECO:0000250" key="3">
    <source>
        <dbReference type="UniProtKB" id="A8W7M4"/>
    </source>
</evidence>
<evidence type="ECO:0000250" key="4">
    <source>
        <dbReference type="UniProtKB" id="P85421"/>
    </source>
</evidence>
<evidence type="ECO:0000303" key="5">
    <source>
    </source>
</evidence>
<evidence type="ECO:0000303" key="6">
    <source ref="1"/>
</evidence>
<evidence type="ECO:0000305" key="7"/>
<dbReference type="EMBL" id="FN555142">
    <property type="protein sequence ID" value="CBG76461.1"/>
    <property type="molecule type" value="Genomic_DNA"/>
</dbReference>
<dbReference type="GO" id="GO:0090729">
    <property type="term" value="F:toxin activity"/>
    <property type="evidence" value="ECO:0007669"/>
    <property type="project" value="UniProtKB-KW"/>
</dbReference>
<dbReference type="InterPro" id="IPR027582">
    <property type="entry name" value="Amanitin/phalloidin"/>
</dbReference>
<dbReference type="NCBIfam" id="TIGR04309">
    <property type="entry name" value="amanitin"/>
    <property type="match status" value="1"/>
</dbReference>
<dbReference type="Pfam" id="PF24112">
    <property type="entry name" value="Amanitin"/>
    <property type="match status" value="1"/>
</dbReference>
<reference key="1">
    <citation type="submission" date="2009-10" db="EMBL/GenBank/DDBJ databases">
        <title>Molecular method for assessing the presence of alpha amanitin in the genus Amanita.</title>
        <authorList>
            <person name="Epis S."/>
            <person name="Matinato C."/>
            <person name="Gentili G."/>
            <person name="Varotto F."/>
            <person name="Bandi C."/>
            <person name="Sassera D."/>
        </authorList>
    </citation>
    <scope>NUCLEOTIDE SEQUENCE [GENOMIC DNA]</scope>
</reference>
<reference key="2">
    <citation type="journal article" date="2002" name="J. Toxicol. Clin. Toxicol.">
        <title>Treatment of amatoxin poisoning: 20-year retrospective analysis.</title>
        <authorList>
            <person name="Enjalbert F."/>
            <person name="Rapior S."/>
            <person name="Nouguier-Soule J."/>
            <person name="Guillon S."/>
            <person name="Amouroux N."/>
            <person name="Cabot C."/>
        </authorList>
    </citation>
    <scope>REVIEW ON TOXICITY</scope>
</reference>
<name>BAMA3_AMAPH</name>
<feature type="propeptide" id="PRO_0000443593" evidence="3">
    <location>
        <begin position="1"/>
        <end position="10"/>
    </location>
</feature>
<feature type="peptide" id="PRO_0000443594" description="Beta-amanitin" evidence="3">
    <location>
        <begin position="11"/>
        <end position="18"/>
    </location>
</feature>
<feature type="propeptide" id="PRO_0000443595" evidence="3">
    <location>
        <begin position="19"/>
        <end position="36"/>
    </location>
</feature>
<feature type="cross-link" description="Cyclopeptide (Ile-Pro)" evidence="3">
    <location>
        <begin position="11"/>
        <end position="18"/>
    </location>
</feature>
<feature type="cross-link" description="2'-cysteinyl-6'-hydroxytryptophan sulfoxide (Trp-Cys)" evidence="4">
    <location>
        <begin position="12"/>
        <end position="16"/>
    </location>
</feature>
<sequence length="36" mass="3778">MSDINATRLPIWGIGCDPCIGDDVTALLTRGEASLC</sequence>
<accession>D6CFW3</accession>
<protein>
    <recommendedName>
        <fullName evidence="6">Beta-amanitin proprotein</fullName>
    </recommendedName>
    <component>
        <recommendedName>
            <fullName evidence="6">Beta-amanitin</fullName>
        </recommendedName>
    </component>
</protein>
<proteinExistence type="inferred from homology"/>
<comment type="function">
    <text evidence="1">Toxin belonging to the bicyclic octapeptides amatoxins that acts by binding non-competitively to RNA polymerase II and greatly slowing the elongation of transcripts from target promoters (By similarity).</text>
</comment>
<comment type="PTM">
    <text evidence="2">Processed by the macrocyclase-peptidase enzyme POPB to yield a toxic cyclic decapeptide (By similarity). POPB first removes 10 residues from the N-terminus (By similarity). Conformational trapping of the remaining peptide forces the enzyme to release this intermediate rather than proceed to macrocyclization (By similarity). The enzyme rebinds the remaining peptide in a different conformation and catalyzes macrocyclization of the N-terminal 8 residues (By similarity).</text>
</comment>
<comment type="miscellaneous">
    <text evidence="5">The typical symptoms of amatoxin poisoning are gastro-intestinal distress beginning 6-12 hours after ingestion, a remission phase lasting 12-24 hours, and progressive loss of liver function culminating in death within 3-5 days (PubMed:12475187). One of the few effective treatments is liver transplantation (PubMed:12475187).</text>
</comment>
<comment type="similarity">
    <text evidence="7">Belongs to the MSDIN fungal toxin family.</text>
</comment>